<feature type="chain" id="PRO_0000133092" description="Replication protein E1">
    <location>
        <begin position="1"/>
        <end position="613"/>
    </location>
</feature>
<feature type="domain" description="SF3 helicase" evidence="1">
    <location>
        <begin position="413"/>
        <end position="566"/>
    </location>
</feature>
<feature type="region of interest" description="Disordered" evidence="2">
    <location>
        <begin position="1"/>
        <end position="31"/>
    </location>
</feature>
<feature type="region of interest" description="Disordered" evidence="2">
    <location>
        <begin position="128"/>
        <end position="152"/>
    </location>
</feature>
<feature type="region of interest" description="DNA-binding region" evidence="1">
    <location>
        <begin position="150"/>
        <end position="317"/>
    </location>
</feature>
<feature type="region of interest" description="Disordered" evidence="2">
    <location>
        <begin position="588"/>
        <end position="613"/>
    </location>
</feature>
<feature type="short sequence motif" description="Nuclear localization signal" evidence="1">
    <location>
        <begin position="71"/>
        <end position="73"/>
    </location>
</feature>
<feature type="compositionally biased region" description="Acidic residues" evidence="2">
    <location>
        <begin position="16"/>
        <end position="31"/>
    </location>
</feature>
<feature type="compositionally biased region" description="Low complexity" evidence="2">
    <location>
        <begin position="129"/>
        <end position="152"/>
    </location>
</feature>
<feature type="compositionally biased region" description="Acidic residues" evidence="2">
    <location>
        <begin position="588"/>
        <end position="597"/>
    </location>
</feature>
<feature type="binding site" evidence="1">
    <location>
        <begin position="442"/>
        <end position="449"/>
    </location>
    <ligand>
        <name>ATP</name>
        <dbReference type="ChEBI" id="CHEBI:30616"/>
    </ligand>
</feature>
<feature type="modified residue" description="Phosphoserine; by host" evidence="1">
    <location>
        <position position="77"/>
    </location>
</feature>
<feature type="modified residue" description="Phosphoserine; by host" evidence="1">
    <location>
        <position position="92"/>
    </location>
</feature>
<sequence>MDPNLKGITGQSFLDDQAECSESDNSEQGCEESLSDLSDLIDNAECEQGNSAELFAQQEAFAFQEHIRTTKRKLKLSFRNPLQCITSQSNRSPGRAAPKRRVLDDSGYNEDILAEVAQVDENGGSEGYGSLASQSLSGQSQKNGKNRVNNGNKENIDCTRLLAASSHRAVQLAIFKEKFGISLNSLTRIFKNDKTCCSNWVGVVFGAREELLAASQTILQRVCDSIMLLTHTCKLGFMGLYLLEFKNAKSRDTVRHLFQQILQVENNDMLLEPPKIKSLPAATFWWKLRHSSAAFLFGNLPDWIARQTSITHQIQEDQPFDLSAMVQWAYDHNFVDEAQIAYYYARLASEDSNAAAFLRCNNQVKHVKECAQMTRYYKTAEMREMSMSKWIKKCLNEIEGTGDWKQIINFIKYQNINFLSFLACFRDLLHSVPKRNCLVIVGPPNTGKSMFVMSLMRTLKGRVLSFVNSKSHFWLQPLNAAKIAILDDATRPTWSYIDTYLRNGLDGTPVSLDMKHRAPMQICFPPLIITTNVDVAKDPTFVYLHSRLMSFEFANAFPLDENGKPALILNELSWKSFFERLWNQLDLTEPEDEDDGDPPSPFRCSARAAARDL</sequence>
<evidence type="ECO:0000255" key="1">
    <source>
        <dbReference type="HAMAP-Rule" id="MF_04000"/>
    </source>
</evidence>
<evidence type="ECO:0000256" key="2">
    <source>
        <dbReference type="SAM" id="MobiDB-lite"/>
    </source>
</evidence>
<organismHost>
    <name type="scientific">Bos taurus</name>
    <name type="common">Bovine</name>
    <dbReference type="NCBI Taxonomy" id="9913"/>
</organismHost>
<reference key="1">
    <citation type="journal article" date="2002" name="J. Virol.">
        <title>Lack of canonical E6 and E7 open reading frames in bird papillomaviruses: Fringilla coelebs papillomavirus and Psittacus erithacus timneh papillomavirus.</title>
        <authorList>
            <person name="Terai M."/>
            <person name="DeSalle R."/>
            <person name="Burk R.D."/>
        </authorList>
    </citation>
    <scope>NUCLEOTIDE SEQUENCE [GENOMIC DNA]</scope>
</reference>
<reference key="2">
    <citation type="submission" date="2004-01" db="EMBL/GenBank/DDBJ databases">
        <title>Sequencing of the complete genomes of BPV 3, BPV 5 and BPV 6.</title>
        <authorList>
            <person name="Delius H."/>
            <person name="de Villiers E.M."/>
        </authorList>
    </citation>
    <scope>NUCLEOTIDE SEQUENCE [GENOMIC DNA]</scope>
</reference>
<name>VE1_BPV3</name>
<proteinExistence type="inferred from homology"/>
<dbReference type="EC" id="5.6.2.4" evidence="1"/>
<dbReference type="EMBL" id="AF486184">
    <property type="protein sequence ID" value="AAN09957.1"/>
    <property type="molecule type" value="Genomic_DNA"/>
</dbReference>
<dbReference type="EMBL" id="AJ620207">
    <property type="protein sequence ID" value="CAF05679.1"/>
    <property type="molecule type" value="Genomic_DNA"/>
</dbReference>
<dbReference type="RefSeq" id="NP_694447.1">
    <property type="nucleotide sequence ID" value="NC_004197.1"/>
</dbReference>
<dbReference type="SMR" id="Q8BDD7"/>
<dbReference type="GeneID" id="955386"/>
<dbReference type="KEGG" id="vg:955386"/>
<dbReference type="Proteomes" id="UP000006369">
    <property type="component" value="Genome"/>
</dbReference>
<dbReference type="Proteomes" id="UP000185274">
    <property type="component" value="Segment"/>
</dbReference>
<dbReference type="GO" id="GO:0042025">
    <property type="term" value="C:host cell nucleus"/>
    <property type="evidence" value="ECO:0007669"/>
    <property type="project" value="UniProtKB-SubCell"/>
</dbReference>
<dbReference type="GO" id="GO:0005524">
    <property type="term" value="F:ATP binding"/>
    <property type="evidence" value="ECO:0007669"/>
    <property type="project" value="UniProtKB-UniRule"/>
</dbReference>
<dbReference type="GO" id="GO:0016887">
    <property type="term" value="F:ATP hydrolysis activity"/>
    <property type="evidence" value="ECO:0007669"/>
    <property type="project" value="RHEA"/>
</dbReference>
<dbReference type="GO" id="GO:0003677">
    <property type="term" value="F:DNA binding"/>
    <property type="evidence" value="ECO:0007669"/>
    <property type="project" value="UniProtKB-UniRule"/>
</dbReference>
<dbReference type="GO" id="GO:0003678">
    <property type="term" value="F:DNA helicase activity"/>
    <property type="evidence" value="ECO:0007669"/>
    <property type="project" value="UniProtKB-UniRule"/>
</dbReference>
<dbReference type="GO" id="GO:0006260">
    <property type="term" value="P:DNA replication"/>
    <property type="evidence" value="ECO:0007669"/>
    <property type="project" value="UniProtKB-UniRule"/>
</dbReference>
<dbReference type="Gene3D" id="3.40.1310.10">
    <property type="match status" value="1"/>
</dbReference>
<dbReference type="Gene3D" id="3.40.50.300">
    <property type="entry name" value="P-loop containing nucleotide triphosphate hydrolases"/>
    <property type="match status" value="1"/>
</dbReference>
<dbReference type="Gene3D" id="1.10.10.510">
    <property type="entry name" value="Zinc finger, large T-antigen D1 domain"/>
    <property type="match status" value="1"/>
</dbReference>
<dbReference type="HAMAP" id="MF_04000">
    <property type="entry name" value="PPV_E1"/>
    <property type="match status" value="1"/>
</dbReference>
<dbReference type="InterPro" id="IPR014015">
    <property type="entry name" value="Helicase_SF3_DNA-vir"/>
</dbReference>
<dbReference type="InterPro" id="IPR027417">
    <property type="entry name" value="P-loop_NTPase"/>
</dbReference>
<dbReference type="InterPro" id="IPR001177">
    <property type="entry name" value="PPV_DNA_helicase_E1_C"/>
</dbReference>
<dbReference type="InterPro" id="IPR014000">
    <property type="entry name" value="PPV_DNA_helicase_E1_N"/>
</dbReference>
<dbReference type="InterPro" id="IPR046832">
    <property type="entry name" value="PPV_E1_DBD"/>
</dbReference>
<dbReference type="InterPro" id="IPR046935">
    <property type="entry name" value="PPV_E1_DBD_sf"/>
</dbReference>
<dbReference type="InterPro" id="IPR016393">
    <property type="entry name" value="Rep_E1_papillomaV"/>
</dbReference>
<dbReference type="InterPro" id="IPR037102">
    <property type="entry name" value="Znf_lg_T-Ag_D1_dom_sf"/>
</dbReference>
<dbReference type="Pfam" id="PF00519">
    <property type="entry name" value="PPV_E1_C"/>
    <property type="match status" value="1"/>
</dbReference>
<dbReference type="Pfam" id="PF20450">
    <property type="entry name" value="PPV_E1_DBD"/>
    <property type="match status" value="1"/>
</dbReference>
<dbReference type="Pfam" id="PF00524">
    <property type="entry name" value="PPV_E1_N"/>
    <property type="match status" value="1"/>
</dbReference>
<dbReference type="PIRSF" id="PIRSF003383">
    <property type="entry name" value="Rep_E1_papillomaV"/>
    <property type="match status" value="1"/>
</dbReference>
<dbReference type="SUPFAM" id="SSF55464">
    <property type="entry name" value="Origin of replication-binding domain, RBD-like"/>
    <property type="match status" value="1"/>
</dbReference>
<dbReference type="SUPFAM" id="SSF52540">
    <property type="entry name" value="P-loop containing nucleoside triphosphate hydrolases"/>
    <property type="match status" value="1"/>
</dbReference>
<dbReference type="PROSITE" id="PS51206">
    <property type="entry name" value="SF3_HELICASE_1"/>
    <property type="match status" value="1"/>
</dbReference>
<accession>Q8BDD7</accession>
<organism>
    <name type="scientific">Bovine papillomavirus type 3</name>
    <dbReference type="NCBI Taxonomy" id="2758957"/>
    <lineage>
        <taxon>Viruses</taxon>
        <taxon>Monodnaviria</taxon>
        <taxon>Shotokuvirae</taxon>
        <taxon>Cossaviricota</taxon>
        <taxon>Papovaviricetes</taxon>
        <taxon>Zurhausenvirales</taxon>
        <taxon>Papillomaviridae</taxon>
        <taxon>Firstpapillomavirinae</taxon>
        <taxon>Xipapillomavirus</taxon>
        <taxon>Xipapillomavirus 1</taxon>
    </lineage>
</organism>
<comment type="function">
    <text evidence="1">ATP-dependent DNA 3'-5' helicase required for initiation of viral DNA replication. It forms a complex with the viral E2 protein. The E1-E2 complex binds to the replication origin which contains binding sites for both proteins. During the initial step, a dimer of E1 interacts with a dimer of protein E2 leading to a complex that binds the viral origin of replication with high specificity. Then, a second dimer of E1 displaces the E2 dimer in an ATP-dependent manner to form the E1 tetramer. Following this, two E1 monomers are added to each half of the site, which results in the formation of two E1 trimers on the viral ori. Subsequently, two hexamers will be created. The double hexamer acts as a bi-directional helicase machinery and unwinds the viral DNA and then recruits the host DNA polymerase to start replication.</text>
</comment>
<comment type="catalytic activity">
    <reaction evidence="1">
        <text>Couples ATP hydrolysis with the unwinding of duplex DNA by translocating in the 3'-5' direction.</text>
        <dbReference type="EC" id="5.6.2.4"/>
    </reaction>
</comment>
<comment type="catalytic activity">
    <reaction evidence="1">
        <text>ATP + H2O = ADP + phosphate + H(+)</text>
        <dbReference type="Rhea" id="RHEA:13065"/>
        <dbReference type="ChEBI" id="CHEBI:15377"/>
        <dbReference type="ChEBI" id="CHEBI:15378"/>
        <dbReference type="ChEBI" id="CHEBI:30616"/>
        <dbReference type="ChEBI" id="CHEBI:43474"/>
        <dbReference type="ChEBI" id="CHEBI:456216"/>
        <dbReference type="EC" id="5.6.2.4"/>
    </reaction>
</comment>
<comment type="subunit">
    <text evidence="1">Can form hexamers. Interacts with E2 protein; this interaction increases E1 DNA binding specificity. Interacts with host DNA polymerase subunit POLA2. Interacts with host single stranded DNA-binding protein RPA1. Interacts with host TOP1; this interaction stimulates the enzymatic activity of TOP1.</text>
</comment>
<comment type="subcellular location">
    <subcellularLocation>
        <location evidence="1">Host nucleus</location>
    </subcellularLocation>
</comment>
<comment type="PTM">
    <text evidence="1">Phosphorylated.</text>
</comment>
<comment type="similarity">
    <text evidence="1">Belongs to the papillomaviridae E1 protein family.</text>
</comment>
<keyword id="KW-0067">ATP-binding</keyword>
<keyword id="KW-0235">DNA replication</keyword>
<keyword id="KW-0238">DNA-binding</keyword>
<keyword id="KW-0244">Early protein</keyword>
<keyword id="KW-0347">Helicase</keyword>
<keyword id="KW-1048">Host nucleus</keyword>
<keyword id="KW-0378">Hydrolase</keyword>
<keyword id="KW-0413">Isomerase</keyword>
<keyword id="KW-0547">Nucleotide-binding</keyword>
<keyword id="KW-0597">Phosphoprotein</keyword>
<keyword id="KW-1185">Reference proteome</keyword>
<protein>
    <recommendedName>
        <fullName evidence="1">Replication protein E1</fullName>
        <ecNumber evidence="1">5.6.2.4</ecNumber>
    </recommendedName>
    <alternativeName>
        <fullName evidence="1">ATP-dependent helicase E1</fullName>
    </alternativeName>
    <alternativeName>
        <fullName evidence="1">DNA 3'-5' helicase E1</fullName>
    </alternativeName>
</protein>
<gene>
    <name evidence="1" type="primary">E1</name>
</gene>